<gene>
    <name evidence="29" type="primary">DAB2IP</name>
    <name type="synonym">AF9Q34</name>
    <name type="synonym">AIP1</name>
    <name type="synonym">KIAA1743</name>
</gene>
<reference key="1">
    <citation type="journal article" date="2002" name="Genomics">
        <title>Differential regulation of the human gene DAB2IP in normal and malignant prostatic epithelia: cloning and characterization.</title>
        <authorList>
            <person name="Chen H."/>
            <person name="Pong R.-C."/>
            <person name="Wang Z."/>
            <person name="Hsieh J.-T."/>
        </authorList>
    </citation>
    <scope>NUCLEOTIDE SEQUENCE [MRNA] (ISOFORM 3)</scope>
    <scope>TISSUE SPECIFICITY</scope>
</reference>
<reference key="2">
    <citation type="journal article" date="2004" name="Genes Chromosomes Cancer">
        <title>Identification of a novel RAS GTPase-activating protein (RASGAP) gene at 9q34 as an MLL fusion partner in a patient with de novo acute myeloid leukemia.</title>
        <authorList>
            <person name="von Bergh A.R.M."/>
            <person name="Wijers P.M."/>
            <person name="Groot A.J."/>
            <person name="van Zelderen-Bhola S."/>
            <person name="Falkenburg J.H.F."/>
            <person name="Kluin P.M."/>
            <person name="Schuuring E."/>
        </authorList>
    </citation>
    <scope>NUCLEOTIDE SEQUENCE [MRNA] (ISOFORM 2)</scope>
    <scope>CHROMOSOMAL TRANSLOCATION WITH KMT2A/MLL1</scope>
</reference>
<reference key="3">
    <citation type="journal article" date="2000" name="DNA Res.">
        <title>Prediction of the coding sequences of unidentified human genes. XIX. The complete sequences of 100 new cDNA clones from brain which code for large proteins in vitro.</title>
        <authorList>
            <person name="Nagase T."/>
            <person name="Kikuno R."/>
            <person name="Hattori A."/>
            <person name="Kondo Y."/>
            <person name="Okumura K."/>
            <person name="Ohara O."/>
        </authorList>
    </citation>
    <scope>NUCLEOTIDE SEQUENCE [LARGE SCALE MRNA] (ISOFORM 4)</scope>
    <source>
        <tissue>Brain</tissue>
    </source>
</reference>
<reference key="4">
    <citation type="journal article" date="2002" name="DNA Res.">
        <title>Construction of expression-ready cDNA clones for KIAA genes: manual curation of 330 KIAA cDNA clones.</title>
        <authorList>
            <person name="Nakajima D."/>
            <person name="Okazaki N."/>
            <person name="Yamakawa H."/>
            <person name="Kikuno R."/>
            <person name="Ohara O."/>
            <person name="Nagase T."/>
        </authorList>
    </citation>
    <scope>SEQUENCE REVISION</scope>
</reference>
<reference key="5">
    <citation type="journal article" date="2004" name="Nature">
        <title>DNA sequence and analysis of human chromosome 9.</title>
        <authorList>
            <person name="Humphray S.J."/>
            <person name="Oliver K."/>
            <person name="Hunt A.R."/>
            <person name="Plumb R.W."/>
            <person name="Loveland J.E."/>
            <person name="Howe K.L."/>
            <person name="Andrews T.D."/>
            <person name="Searle S."/>
            <person name="Hunt S.E."/>
            <person name="Scott C.E."/>
            <person name="Jones M.C."/>
            <person name="Ainscough R."/>
            <person name="Almeida J.P."/>
            <person name="Ambrose K.D."/>
            <person name="Ashwell R.I.S."/>
            <person name="Babbage A.K."/>
            <person name="Babbage S."/>
            <person name="Bagguley C.L."/>
            <person name="Bailey J."/>
            <person name="Banerjee R."/>
            <person name="Barker D.J."/>
            <person name="Barlow K.F."/>
            <person name="Bates K."/>
            <person name="Beasley H."/>
            <person name="Beasley O."/>
            <person name="Bird C.P."/>
            <person name="Bray-Allen S."/>
            <person name="Brown A.J."/>
            <person name="Brown J.Y."/>
            <person name="Burford D."/>
            <person name="Burrill W."/>
            <person name="Burton J."/>
            <person name="Carder C."/>
            <person name="Carter N.P."/>
            <person name="Chapman J.C."/>
            <person name="Chen Y."/>
            <person name="Clarke G."/>
            <person name="Clark S.Y."/>
            <person name="Clee C.M."/>
            <person name="Clegg S."/>
            <person name="Collier R.E."/>
            <person name="Corby N."/>
            <person name="Crosier M."/>
            <person name="Cummings A.T."/>
            <person name="Davies J."/>
            <person name="Dhami P."/>
            <person name="Dunn M."/>
            <person name="Dutta I."/>
            <person name="Dyer L.W."/>
            <person name="Earthrowl M.E."/>
            <person name="Faulkner L."/>
            <person name="Fleming C.J."/>
            <person name="Frankish A."/>
            <person name="Frankland J.A."/>
            <person name="French L."/>
            <person name="Fricker D.G."/>
            <person name="Garner P."/>
            <person name="Garnett J."/>
            <person name="Ghori J."/>
            <person name="Gilbert J.G.R."/>
            <person name="Glison C."/>
            <person name="Grafham D.V."/>
            <person name="Gribble S."/>
            <person name="Griffiths C."/>
            <person name="Griffiths-Jones S."/>
            <person name="Grocock R."/>
            <person name="Guy J."/>
            <person name="Hall R.E."/>
            <person name="Hammond S."/>
            <person name="Harley J.L."/>
            <person name="Harrison E.S.I."/>
            <person name="Hart E.A."/>
            <person name="Heath P.D."/>
            <person name="Henderson C.D."/>
            <person name="Hopkins B.L."/>
            <person name="Howard P.J."/>
            <person name="Howden P.J."/>
            <person name="Huckle E."/>
            <person name="Johnson C."/>
            <person name="Johnson D."/>
            <person name="Joy A.A."/>
            <person name="Kay M."/>
            <person name="Keenan S."/>
            <person name="Kershaw J.K."/>
            <person name="Kimberley A.M."/>
            <person name="King A."/>
            <person name="Knights A."/>
            <person name="Laird G.K."/>
            <person name="Langford C."/>
            <person name="Lawlor S."/>
            <person name="Leongamornlert D.A."/>
            <person name="Leversha M."/>
            <person name="Lloyd C."/>
            <person name="Lloyd D.M."/>
            <person name="Lovell J."/>
            <person name="Martin S."/>
            <person name="Mashreghi-Mohammadi M."/>
            <person name="Matthews L."/>
            <person name="McLaren S."/>
            <person name="McLay K.E."/>
            <person name="McMurray A."/>
            <person name="Milne S."/>
            <person name="Nickerson T."/>
            <person name="Nisbett J."/>
            <person name="Nordsiek G."/>
            <person name="Pearce A.V."/>
            <person name="Peck A.I."/>
            <person name="Porter K.M."/>
            <person name="Pandian R."/>
            <person name="Pelan S."/>
            <person name="Phillimore B."/>
            <person name="Povey S."/>
            <person name="Ramsey Y."/>
            <person name="Rand V."/>
            <person name="Scharfe M."/>
            <person name="Sehra H.K."/>
            <person name="Shownkeen R."/>
            <person name="Sims S.K."/>
            <person name="Skuce C.D."/>
            <person name="Smith M."/>
            <person name="Steward C.A."/>
            <person name="Swarbreck D."/>
            <person name="Sycamore N."/>
            <person name="Tester J."/>
            <person name="Thorpe A."/>
            <person name="Tracey A."/>
            <person name="Tromans A."/>
            <person name="Thomas D.W."/>
            <person name="Wall M."/>
            <person name="Wallis J.M."/>
            <person name="West A.P."/>
            <person name="Whitehead S.L."/>
            <person name="Willey D.L."/>
            <person name="Williams S.A."/>
            <person name="Wilming L."/>
            <person name="Wray P.W."/>
            <person name="Young L."/>
            <person name="Ashurst J.L."/>
            <person name="Coulson A."/>
            <person name="Blocker H."/>
            <person name="Durbin R.M."/>
            <person name="Sulston J.E."/>
            <person name="Hubbard T."/>
            <person name="Jackson M.J."/>
            <person name="Bentley D.R."/>
            <person name="Beck S."/>
            <person name="Rogers J."/>
            <person name="Dunham I."/>
        </authorList>
    </citation>
    <scope>NUCLEOTIDE SEQUENCE [LARGE SCALE GENOMIC DNA]</scope>
</reference>
<reference key="6">
    <citation type="submission" date="2005-09" db="EMBL/GenBank/DDBJ databases">
        <authorList>
            <person name="Mural R.J."/>
            <person name="Istrail S."/>
            <person name="Sutton G.G."/>
            <person name="Florea L."/>
            <person name="Halpern A.L."/>
            <person name="Mobarry C.M."/>
            <person name="Lippert R."/>
            <person name="Walenz B."/>
            <person name="Shatkay H."/>
            <person name="Dew I."/>
            <person name="Miller J.R."/>
            <person name="Flanigan M.J."/>
            <person name="Edwards N.J."/>
            <person name="Bolanos R."/>
            <person name="Fasulo D."/>
            <person name="Halldorsson B.V."/>
            <person name="Hannenhalli S."/>
            <person name="Turner R."/>
            <person name="Yooseph S."/>
            <person name="Lu F."/>
            <person name="Nusskern D.R."/>
            <person name="Shue B.C."/>
            <person name="Zheng X.H."/>
            <person name="Zhong F."/>
            <person name="Delcher A.L."/>
            <person name="Huson D.H."/>
            <person name="Kravitz S.A."/>
            <person name="Mouchard L."/>
            <person name="Reinert K."/>
            <person name="Remington K.A."/>
            <person name="Clark A.G."/>
            <person name="Waterman M.S."/>
            <person name="Eichler E.E."/>
            <person name="Adams M.D."/>
            <person name="Hunkapiller M.W."/>
            <person name="Myers E.W."/>
            <person name="Venter J.C."/>
        </authorList>
    </citation>
    <scope>NUCLEOTIDE SEQUENCE [LARGE SCALE GENOMIC DNA]</scope>
</reference>
<reference key="7">
    <citation type="journal article" date="2004" name="Genome Res.">
        <title>The status, quality, and expansion of the NIH full-length cDNA project: the Mammalian Gene Collection (MGC).</title>
        <authorList>
            <consortium name="The MGC Project Team"/>
        </authorList>
    </citation>
    <scope>NUCLEOTIDE SEQUENCE [LARGE SCALE MRNA] (ISOFORM 4)</scope>
</reference>
<reference key="8">
    <citation type="journal article" date="2003" name="J. Clin. Invest.">
        <title>AIP1 mediates TNF-alpha-induced ASK1 activation by facilitating dissociation of ASK1 from its inhibitor 14-3-3.</title>
        <authorList>
            <person name="Zhang R."/>
            <person name="He X."/>
            <person name="Liu W."/>
            <person name="Lu M."/>
            <person name="Hsieh J.-T."/>
            <person name="Min W."/>
        </authorList>
    </citation>
    <scope>FUNCTION</scope>
    <scope>INTERACTION WITH MAP3K5</scope>
    <scope>MUTAGENESIS OF 228-LYS--LYS-230; 281-LYS--LYS-284 AND ARG-413</scope>
</reference>
<reference key="9">
    <citation type="journal article" date="2004" name="J. Biol. Chem.">
        <title>AIP1/DAB2IP, a novel member of the Ras-GAP family, transduces TRAF2-induced ASK1-JNK activation.</title>
        <authorList>
            <person name="Zhang H."/>
            <person name="Zhang R."/>
            <person name="Luo Y."/>
            <person name="D'Alessio A."/>
            <person name="Pober J.S."/>
            <person name="Min W."/>
        </authorList>
    </citation>
    <scope>SUBCELLULAR LOCATION</scope>
    <scope>INTERACTION WITH TNFR1; MAP3K5; TRADD; RIPK1 AND TRAF2</scope>
</reference>
<reference key="10">
    <citation type="journal article" date="2005" name="J. Biol. Chem.">
        <title>Tumor necrosis factor alpha-induced desumoylation and cytoplasmic translocation of homeodomain-interacting protein kinase 1 are critical for apoptosis signal-regulating kinase 1-JNK/p38 activation.</title>
        <authorList>
            <person name="Li X."/>
            <person name="Zhang R."/>
            <person name="Luo D."/>
            <person name="Park S.-J."/>
            <person name="Wang Q."/>
            <person name="Kim Y."/>
            <person name="Min W."/>
        </authorList>
    </citation>
    <scope>INTERACTION WITH HIPK1</scope>
    <scope>SUBCELLULAR LOCATION</scope>
</reference>
<reference key="11">
    <citation type="journal article" date="2007" name="J. Biol. Chem.">
        <title>RIP1-mediated AIP1 phosphorylation at a 14-3-3-binding site is critical for tumor necrosis factor-induced ASK1-JNK/p38 activation.</title>
        <authorList>
            <person name="Zhang H."/>
            <person name="Zhang H."/>
            <person name="Lin Y."/>
            <person name="Li J."/>
            <person name="Pober J.S."/>
            <person name="Min W."/>
        </authorList>
    </citation>
    <scope>FUNCTION</scope>
    <scope>INTERACTION WITH 14-3-3 PROTEINS; MAP3K5; RIPK1 AND TRAF2</scope>
    <scope>PHOSPHORYLATION AT SER-728</scope>
    <scope>MUTAGENESIS OF SER-728 AND THR-935</scope>
    <scope>TISSUE SPECIFICITY</scope>
</reference>
<reference key="12">
    <citation type="journal article" date="2008" name="Circ. Res.">
        <title>AIP1 recruits phosphatase PP2A to ASK1 in tumor necrosis factor-induced ASK1-JNK activation.</title>
        <authorList>
            <person name="Min W."/>
            <person name="Lin Y."/>
            <person name="Tang S."/>
            <person name="Yu L."/>
            <person name="Zhang H."/>
            <person name="Wan T."/>
            <person name="Luhn T."/>
            <person name="Fu H."/>
            <person name="Chen H."/>
        </authorList>
    </citation>
    <scope>FUNCTION</scope>
    <scope>MUTAGENESIS OF SER-728</scope>
</reference>
<reference key="13">
    <citation type="journal article" date="2008" name="J. Clin. Invest.">
        <title>AIP1 functions as an endogenous inhibitor of VEGFR2-mediated signaling and inflammatory angiogenesis in mice.</title>
        <authorList>
            <person name="Zhang H."/>
            <person name="He Y."/>
            <person name="Dai S."/>
            <person name="Xu Z."/>
            <person name="Luo Y."/>
            <person name="Wan T."/>
            <person name="Luo D."/>
            <person name="Jones D."/>
            <person name="Tang S."/>
            <person name="Chen H."/>
            <person name="Sessa W.C."/>
            <person name="Min W."/>
        </authorList>
    </citation>
    <scope>FUNCTION</scope>
    <scope>INTERACTION WITH KDR AND P85 SUBUNIT OF PI3K</scope>
    <scope>MUTAGENESIS OF 228-LYS--LYS-230 AND 281-LYS--LYS-284</scope>
</reference>
<reference key="14">
    <citation type="journal article" date="2008" name="Proc. Natl. Acad. Sci. U.S.A.">
        <title>A quantitative atlas of mitotic phosphorylation.</title>
        <authorList>
            <person name="Dephoure N."/>
            <person name="Zhou C."/>
            <person name="Villen J."/>
            <person name="Beausoleil S.A."/>
            <person name="Bakalarski C.E."/>
            <person name="Elledge S.J."/>
            <person name="Gygi S.P."/>
        </authorList>
    </citation>
    <scope>IDENTIFICATION BY MASS SPECTROMETRY [LARGE SCALE ANALYSIS]</scope>
    <source>
        <tissue>Cervix carcinoma</tissue>
    </source>
</reference>
<reference key="15">
    <citation type="journal article" date="2009" name="Proc. Natl. Acad. Sci. U.S.A.">
        <title>DAB2IP coordinates both PI3K-Akt and ASK1 pathways for cell survival and apoptosis.</title>
        <authorList>
            <person name="Xie D."/>
            <person name="Gore C."/>
            <person name="Zhou J."/>
            <person name="Pong R.C."/>
            <person name="Zhang H."/>
            <person name="Yu L."/>
            <person name="Vessella R.L."/>
            <person name="Min W."/>
            <person name="Hsieh J.T."/>
        </authorList>
    </citation>
    <scope>FUNCTION</scope>
    <scope>INTERACTION WITH AKT1 AND P85 SUBUNIT OF PI3K</scope>
    <scope>PHOSPHORYLATION AT SER-728</scope>
    <scope>MUTAGENESIS OF ARG-413; SER-728 AND 920-PRO--PRO-929</scope>
</reference>
<reference key="16">
    <citation type="journal article" date="2010" name="J. Biol. Chem.">
        <title>AIP1 functions as Arf6-GAP to negatively regulate TLR4 signaling.</title>
        <authorList>
            <person name="Wan T."/>
            <person name="Liu T."/>
            <person name="Zhang H."/>
            <person name="Tang S."/>
            <person name="Min W."/>
        </authorList>
    </citation>
    <scope>FUNCTION</scope>
    <scope>INTERACTION WITH PHOSPHATIDYLINOSITOL</scope>
    <scope>SUBCELLULAR LOCATION</scope>
    <scope>MUTAGENESIS OF ARG-413</scope>
</reference>
<reference key="17">
    <citation type="journal article" date="2010" name="Nat. Med.">
        <title>An oncogene-tumor suppressor cascade drives metastatic prostate cancer by coordinately activating Ras and nuclear factor-kappaB.</title>
        <authorList>
            <person name="Min J."/>
            <person name="Zaslavsky A."/>
            <person name="Fedele G."/>
            <person name="McLaughlin S.K."/>
            <person name="Reczek E.E."/>
            <person name="De Raedt T."/>
            <person name="Guney I."/>
            <person name="Strochlic D.E."/>
            <person name="Macconaill L.E."/>
            <person name="Beroukhim R."/>
            <person name="Bronson R.T."/>
            <person name="Ryeom S."/>
            <person name="Hahn W.C."/>
            <person name="Loda M."/>
            <person name="Cichowski K."/>
        </authorList>
    </citation>
    <scope>FUNCTION IN PROSTATE CANCER</scope>
    <scope>INDUCTION</scope>
    <scope>MUTAGENESIS OF ARG-413 AND SER-728</scope>
</reference>
<reference key="18">
    <citation type="journal article" date="2010" name="Proc. Natl. Acad. Sci. U.S.A.">
        <title>Role of DAB2IP in modulating epithelial-to-mesenchymal transition and prostate cancer metastasis.</title>
        <authorList>
            <person name="Xie D."/>
            <person name="Gore C."/>
            <person name="Liu J."/>
            <person name="Pong R.C."/>
            <person name="Mason R."/>
            <person name="Hao G."/>
            <person name="Long M."/>
            <person name="Kabbani W."/>
            <person name="Yu L."/>
            <person name="Zhang H."/>
            <person name="Chen H."/>
            <person name="Sun X."/>
            <person name="Boothman D.A."/>
            <person name="Min W."/>
            <person name="Hsieh J.T."/>
        </authorList>
    </citation>
    <scope>FUNCTION IN PROSTATE CANCER</scope>
    <scope>INTERACTION WITH GSK3B AND PPP2CA</scope>
</reference>
<reference key="19">
    <citation type="journal article" date="2011" name="BMC Syst. Biol.">
        <title>Initial characterization of the human central proteome.</title>
        <authorList>
            <person name="Burkard T.R."/>
            <person name="Planyavsky M."/>
            <person name="Kaupe I."/>
            <person name="Breitwieser F.P."/>
            <person name="Buerckstuemmer T."/>
            <person name="Bennett K.L."/>
            <person name="Superti-Furga G."/>
            <person name="Colinge J."/>
        </authorList>
    </citation>
    <scope>IDENTIFICATION BY MASS SPECTROMETRY [LARGE SCALE ANALYSIS]</scope>
</reference>
<reference key="20">
    <citation type="journal article" date="2011" name="Circ. Res.">
        <title>AIP1 prevents graft arteriosclerosis by inhibiting interferon-gamma-dependent smooth muscle cell proliferation and intimal expansion.</title>
        <authorList>
            <person name="Yu L."/>
            <person name="Qin L."/>
            <person name="Zhang H."/>
            <person name="He Y."/>
            <person name="Chen H."/>
            <person name="Pober J.S."/>
            <person name="Tellides G."/>
            <person name="Min W."/>
        </authorList>
    </citation>
    <scope>FUNCTION</scope>
    <scope>INTERACTION WITH JAK2</scope>
    <scope>TISSUE SPECIFICITY</scope>
</reference>
<reference key="21">
    <citation type="journal article" date="2011" name="Sci. Signal.">
        <title>System-wide temporal characterization of the proteome and phosphoproteome of human embryonic stem cell differentiation.</title>
        <authorList>
            <person name="Rigbolt K.T."/>
            <person name="Prokhorova T.A."/>
            <person name="Akimov V."/>
            <person name="Henningsen J."/>
            <person name="Johansen P.T."/>
            <person name="Kratchmarova I."/>
            <person name="Kassem M."/>
            <person name="Mann M."/>
            <person name="Olsen J.V."/>
            <person name="Blagoev B."/>
        </authorList>
    </citation>
    <scope>PHOSPHORYLATION [LARGE SCALE ANALYSIS] AT SER-978</scope>
    <scope>IDENTIFICATION BY MASS SPECTROMETRY [LARGE SCALE ANALYSIS]</scope>
</reference>
<reference key="22">
    <citation type="journal article" date="2012" name="Clin. Cancer Res.">
        <title>EZH2-regulated DAB2IP is a medulloblastoma tumor suppressor and a positive marker for survival.</title>
        <authorList>
            <person name="Smits M."/>
            <person name="van Rijn S."/>
            <person name="Hulleman E."/>
            <person name="Biesmans D."/>
            <person name="van Vuurden D.G."/>
            <person name="Kool M."/>
            <person name="Haberler C."/>
            <person name="Aronica E."/>
            <person name="Vandertop W.P."/>
            <person name="Noske D.P."/>
            <person name="Wurdinger T."/>
        </authorList>
    </citation>
    <scope>FUNCTION IN MEDULLOBLASTOMA DEVELOPMENT</scope>
    <scope>INDUCTION</scope>
    <scope>TISSUE SPECIFICITY</scope>
</reference>
<reference key="23">
    <citation type="journal article" date="2013" name="J. Proteome Res.">
        <title>Toward a comprehensive characterization of a human cancer cell phosphoproteome.</title>
        <authorList>
            <person name="Zhou H."/>
            <person name="Di Palma S."/>
            <person name="Preisinger C."/>
            <person name="Peng M."/>
            <person name="Polat A.N."/>
            <person name="Heck A.J."/>
            <person name="Mohammed S."/>
        </authorList>
    </citation>
    <scope>PHOSPHORYLATION [LARGE SCALE ANALYSIS] AT SER-747; SER-978 AND SER-995</scope>
    <scope>IDENTIFICATION BY MASS SPECTROMETRY [LARGE SCALE ANALYSIS]</scope>
    <source>
        <tissue>Cervix carcinoma</tissue>
    </source>
</reference>
<reference key="24">
    <citation type="journal article" date="2017" name="Oncotarget">
        <title>A RasGAP, DAB2IP, regulates lipid droplet homeostasis by serving as GAP toward RAB40C.</title>
        <authorList>
            <person name="Luo X."/>
            <person name="Li C."/>
            <person name="Tan R."/>
            <person name="Xu X."/>
            <person name="Wu W.K.K."/>
            <person name="Satoh A."/>
            <person name="Wang T."/>
            <person name="Yu S."/>
        </authorList>
    </citation>
    <scope>FUNCTION</scope>
    <scope>INTERACTION WITH RAB40C</scope>
    <scope>MUTAGENESIS OF ARG-413</scope>
    <scope>SUBCELLULAR LOCATION</scope>
</reference>
<name>DAB2P_HUMAN</name>
<accession>Q5VWQ8</accession>
<accession>A6H8V2</accession>
<accession>A6NHI9</accession>
<accession>B0QZB1</accession>
<accession>G3XA90</accession>
<accession>Q8TDL2</accession>
<accession>Q96SE1</accession>
<accession>Q9C0C0</accession>
<proteinExistence type="evidence at protein level"/>
<protein>
    <recommendedName>
        <fullName>Disabled homolog 2-interacting protein</fullName>
        <shortName>DAB2 interaction protein</shortName>
        <shortName>DAB2-interacting protein</shortName>
    </recommendedName>
    <alternativeName>
        <fullName>ASK-interacting protein 1</fullName>
        <shortName>AIP-1</shortName>
    </alternativeName>
    <alternativeName>
        <fullName>DOC-2/DAB-2 interactive protein</fullName>
    </alternativeName>
</protein>
<dbReference type="EMBL" id="AF367051">
    <property type="protein sequence ID" value="AAM00371.1"/>
    <property type="molecule type" value="mRNA"/>
</dbReference>
<dbReference type="EMBL" id="AY032952">
    <property type="protein sequence ID" value="AAK50336.1"/>
    <property type="molecule type" value="mRNA"/>
</dbReference>
<dbReference type="EMBL" id="AB051530">
    <property type="protein sequence ID" value="BAB21834.2"/>
    <property type="molecule type" value="mRNA"/>
</dbReference>
<dbReference type="EMBL" id="AL357936">
    <property type="status" value="NOT_ANNOTATED_CDS"/>
    <property type="molecule type" value="Genomic_DNA"/>
</dbReference>
<dbReference type="EMBL" id="AL365274">
    <property type="status" value="NOT_ANNOTATED_CDS"/>
    <property type="molecule type" value="Genomic_DNA"/>
</dbReference>
<dbReference type="EMBL" id="CH471090">
    <property type="protein sequence ID" value="EAW87503.1"/>
    <property type="molecule type" value="Genomic_DNA"/>
</dbReference>
<dbReference type="EMBL" id="CH471090">
    <property type="protein sequence ID" value="EAW87504.1"/>
    <property type="molecule type" value="Genomic_DNA"/>
</dbReference>
<dbReference type="EMBL" id="BC146762">
    <property type="protein sequence ID" value="AAI46763.1"/>
    <property type="molecule type" value="mRNA"/>
</dbReference>
<dbReference type="CCDS" id="CCDS6832.1">
    <molecule id="Q5VWQ8-2"/>
</dbReference>
<dbReference type="CCDS" id="CCDS6833.2">
    <molecule id="Q5VWQ8-5"/>
</dbReference>
<dbReference type="CCDS" id="CCDS94477.1">
    <molecule id="Q5VWQ8-1"/>
</dbReference>
<dbReference type="RefSeq" id="NP_001381939.1">
    <molecule id="Q5VWQ8-1"/>
    <property type="nucleotide sequence ID" value="NM_001395010.1"/>
</dbReference>
<dbReference type="RefSeq" id="NP_115941.2">
    <molecule id="Q5VWQ8-5"/>
    <property type="nucleotide sequence ID" value="NM_032552.4"/>
</dbReference>
<dbReference type="RefSeq" id="NP_619723.1">
    <molecule id="Q5VWQ8-2"/>
    <property type="nucleotide sequence ID" value="NM_138709.2"/>
</dbReference>
<dbReference type="RefSeq" id="XP_005251776.1">
    <property type="nucleotide sequence ID" value="XM_005251719.4"/>
</dbReference>
<dbReference type="RefSeq" id="XP_011516572.1">
    <property type="nucleotide sequence ID" value="XM_011518270.2"/>
</dbReference>
<dbReference type="RefSeq" id="XP_011516573.1">
    <property type="nucleotide sequence ID" value="XM_011518271.2"/>
</dbReference>
<dbReference type="RefSeq" id="XP_016869789.1">
    <property type="nucleotide sequence ID" value="XM_017014300.1"/>
</dbReference>
<dbReference type="SMR" id="Q5VWQ8"/>
<dbReference type="BioGRID" id="127478">
    <property type="interactions" value="82"/>
</dbReference>
<dbReference type="DIP" id="DIP-41721N"/>
<dbReference type="FunCoup" id="Q5VWQ8">
    <property type="interactions" value="835"/>
</dbReference>
<dbReference type="IntAct" id="Q5VWQ8">
    <property type="interactions" value="43"/>
</dbReference>
<dbReference type="MINT" id="Q5VWQ8"/>
<dbReference type="STRING" id="9606.ENSP00000259371"/>
<dbReference type="ChEMBL" id="CHEMBL4523330"/>
<dbReference type="CarbonylDB" id="Q5VWQ8"/>
<dbReference type="GlyGen" id="Q5VWQ8">
    <property type="glycosylation" value="1 site"/>
</dbReference>
<dbReference type="iPTMnet" id="Q5VWQ8"/>
<dbReference type="PhosphoSitePlus" id="Q5VWQ8"/>
<dbReference type="BioMuta" id="DAB2IP"/>
<dbReference type="DMDM" id="116247768"/>
<dbReference type="jPOST" id="Q5VWQ8"/>
<dbReference type="MassIVE" id="Q5VWQ8"/>
<dbReference type="PaxDb" id="9606-ENSP00000259371"/>
<dbReference type="PeptideAtlas" id="Q5VWQ8"/>
<dbReference type="ProteomicsDB" id="33682"/>
<dbReference type="ProteomicsDB" id="65554">
    <molecule id="Q5VWQ8-1"/>
</dbReference>
<dbReference type="ProteomicsDB" id="65555">
    <molecule id="Q5VWQ8-2"/>
</dbReference>
<dbReference type="ProteomicsDB" id="65556">
    <molecule id="Q5VWQ8-3"/>
</dbReference>
<dbReference type="ProteomicsDB" id="65557">
    <molecule id="Q5VWQ8-4"/>
</dbReference>
<dbReference type="Pumba" id="Q5VWQ8"/>
<dbReference type="Antibodypedia" id="48362">
    <property type="antibodies" value="112 antibodies from 20 providers"/>
</dbReference>
<dbReference type="DNASU" id="153090"/>
<dbReference type="Ensembl" id="ENST00000259371.7">
    <molecule id="Q5VWQ8-5"/>
    <property type="protein sequence ID" value="ENSP00000259371.2"/>
    <property type="gene ID" value="ENSG00000136848.19"/>
</dbReference>
<dbReference type="Ensembl" id="ENST00000309989.1">
    <molecule id="Q5VWQ8-2"/>
    <property type="protein sequence ID" value="ENSP00000310827.1"/>
    <property type="gene ID" value="ENSG00000136848.19"/>
</dbReference>
<dbReference type="Ensembl" id="ENST00000408936.8">
    <molecule id="Q5VWQ8-1"/>
    <property type="protein sequence ID" value="ENSP00000386183.3"/>
    <property type="gene ID" value="ENSG00000136848.19"/>
</dbReference>
<dbReference type="GeneID" id="153090"/>
<dbReference type="KEGG" id="hsa:153090"/>
<dbReference type="MANE-Select" id="ENST00000408936.8">
    <property type="protein sequence ID" value="ENSP00000386183.3"/>
    <property type="RefSeq nucleotide sequence ID" value="NM_001395010.1"/>
    <property type="RefSeq protein sequence ID" value="NP_001381939.1"/>
</dbReference>
<dbReference type="UCSC" id="uc004bln.5">
    <molecule id="Q5VWQ8-1"/>
    <property type="organism name" value="human"/>
</dbReference>
<dbReference type="AGR" id="HGNC:17294"/>
<dbReference type="CTD" id="153090"/>
<dbReference type="DisGeNET" id="153090"/>
<dbReference type="GeneCards" id="DAB2IP"/>
<dbReference type="HGNC" id="HGNC:17294">
    <property type="gene designation" value="DAB2IP"/>
</dbReference>
<dbReference type="HPA" id="ENSG00000136848">
    <property type="expression patterns" value="Low tissue specificity"/>
</dbReference>
<dbReference type="MIM" id="609205">
    <property type="type" value="gene"/>
</dbReference>
<dbReference type="neXtProt" id="NX_Q5VWQ8"/>
<dbReference type="OpenTargets" id="ENSG00000136848"/>
<dbReference type="PharmGKB" id="PA27133"/>
<dbReference type="VEuPathDB" id="HostDB:ENSG00000136848"/>
<dbReference type="eggNOG" id="KOG3508">
    <property type="taxonomic scope" value="Eukaryota"/>
</dbReference>
<dbReference type="GeneTree" id="ENSGT00940000155853"/>
<dbReference type="HOGENOM" id="CLU_001727_1_0_1"/>
<dbReference type="InParanoid" id="Q5VWQ8"/>
<dbReference type="OMA" id="PWKPDLV"/>
<dbReference type="OrthoDB" id="5572587at2759"/>
<dbReference type="PAN-GO" id="Q5VWQ8">
    <property type="GO annotations" value="0 GO annotations based on evolutionary models"/>
</dbReference>
<dbReference type="PhylomeDB" id="Q5VWQ8"/>
<dbReference type="TreeFam" id="TF105303"/>
<dbReference type="PathwayCommons" id="Q5VWQ8"/>
<dbReference type="Reactome" id="R-HSA-5658442">
    <property type="pathway name" value="Regulation of RAS by GAPs"/>
</dbReference>
<dbReference type="SignaLink" id="Q5VWQ8"/>
<dbReference type="SIGNOR" id="Q5VWQ8"/>
<dbReference type="BioGRID-ORCS" id="153090">
    <property type="hits" value="19 hits in 1148 CRISPR screens"/>
</dbReference>
<dbReference type="CD-CODE" id="FB4E32DD">
    <property type="entry name" value="Presynaptic clusters and postsynaptic densities"/>
</dbReference>
<dbReference type="ChiTaRS" id="DAB2IP">
    <property type="organism name" value="human"/>
</dbReference>
<dbReference type="GeneWiki" id="DAB2IP"/>
<dbReference type="GenomeRNAi" id="153090"/>
<dbReference type="Pharos" id="Q5VWQ8">
    <property type="development level" value="Tchem"/>
</dbReference>
<dbReference type="PRO" id="PR:Q5VWQ8"/>
<dbReference type="Proteomes" id="UP000005640">
    <property type="component" value="Chromosome 9"/>
</dbReference>
<dbReference type="RNAct" id="Q5VWQ8">
    <property type="molecule type" value="protein"/>
</dbReference>
<dbReference type="Bgee" id="ENSG00000136848">
    <property type="expression patterns" value="Expressed in right hemisphere of cerebellum and 179 other cell types or tissues"/>
</dbReference>
<dbReference type="ExpressionAtlas" id="Q5VWQ8">
    <property type="expression patterns" value="baseline and differential"/>
</dbReference>
<dbReference type="GO" id="GO:1990597">
    <property type="term" value="C:AIP1-IRE1 complex"/>
    <property type="evidence" value="ECO:0000314"/>
    <property type="project" value="ParkinsonsUK-UCL"/>
</dbReference>
<dbReference type="GO" id="GO:0030424">
    <property type="term" value="C:axon"/>
    <property type="evidence" value="ECO:0000250"/>
    <property type="project" value="UniProtKB"/>
</dbReference>
<dbReference type="GO" id="GO:0044300">
    <property type="term" value="C:cerebellar mossy fiber"/>
    <property type="evidence" value="ECO:0000250"/>
    <property type="project" value="UniProtKB"/>
</dbReference>
<dbReference type="GO" id="GO:0044301">
    <property type="term" value="C:climbing fiber"/>
    <property type="evidence" value="ECO:0000250"/>
    <property type="project" value="UniProtKB"/>
</dbReference>
<dbReference type="GO" id="GO:0005737">
    <property type="term" value="C:cytoplasm"/>
    <property type="evidence" value="ECO:0000314"/>
    <property type="project" value="UniProtKB"/>
</dbReference>
<dbReference type="GO" id="GO:0005829">
    <property type="term" value="C:cytosol"/>
    <property type="evidence" value="ECO:0000304"/>
    <property type="project" value="Reactome"/>
</dbReference>
<dbReference type="GO" id="GO:0030425">
    <property type="term" value="C:dendrite"/>
    <property type="evidence" value="ECO:0007669"/>
    <property type="project" value="UniProtKB-SubCell"/>
</dbReference>
<dbReference type="GO" id="GO:0030139">
    <property type="term" value="C:endocytic vesicle"/>
    <property type="evidence" value="ECO:0000314"/>
    <property type="project" value="UniProtKB"/>
</dbReference>
<dbReference type="GO" id="GO:0043025">
    <property type="term" value="C:neuronal cell body"/>
    <property type="evidence" value="ECO:0000250"/>
    <property type="project" value="UniProtKB"/>
</dbReference>
<dbReference type="GO" id="GO:0032809">
    <property type="term" value="C:neuronal cell body membrane"/>
    <property type="evidence" value="ECO:0000250"/>
    <property type="project" value="UniProtKB"/>
</dbReference>
<dbReference type="GO" id="GO:1990032">
    <property type="term" value="C:parallel fiber"/>
    <property type="evidence" value="ECO:0000250"/>
    <property type="project" value="UniProtKB"/>
</dbReference>
<dbReference type="GO" id="GO:0005886">
    <property type="term" value="C:plasma membrane"/>
    <property type="evidence" value="ECO:0000314"/>
    <property type="project" value="UniProtKB"/>
</dbReference>
<dbReference type="GO" id="GO:0071889">
    <property type="term" value="F:14-3-3 protein binding"/>
    <property type="evidence" value="ECO:0000314"/>
    <property type="project" value="BHF-UCL"/>
</dbReference>
<dbReference type="GO" id="GO:0045296">
    <property type="term" value="F:cadherin binding"/>
    <property type="evidence" value="ECO:0007005"/>
    <property type="project" value="BHF-UCL"/>
</dbReference>
<dbReference type="GO" id="GO:0005123">
    <property type="term" value="F:death receptor binding"/>
    <property type="evidence" value="ECO:0000353"/>
    <property type="project" value="BHF-UCL"/>
</dbReference>
<dbReference type="GO" id="GO:0005096">
    <property type="term" value="F:GTPase activator activity"/>
    <property type="evidence" value="ECO:0007669"/>
    <property type="project" value="UniProtKB-KW"/>
</dbReference>
<dbReference type="GO" id="GO:0042802">
    <property type="term" value="F:identical protein binding"/>
    <property type="evidence" value="ECO:0000353"/>
    <property type="project" value="IntAct"/>
</dbReference>
<dbReference type="GO" id="GO:0019900">
    <property type="term" value="F:kinase binding"/>
    <property type="evidence" value="ECO:0000353"/>
    <property type="project" value="UniProtKB"/>
</dbReference>
<dbReference type="GO" id="GO:0031434">
    <property type="term" value="F:mitogen-activated protein kinase kinase binding"/>
    <property type="evidence" value="ECO:0000353"/>
    <property type="project" value="UniProtKB"/>
</dbReference>
<dbReference type="GO" id="GO:0031435">
    <property type="term" value="F:mitogen-activated protein kinase kinase kinase binding"/>
    <property type="evidence" value="ECO:0000353"/>
    <property type="project" value="BHF-UCL"/>
</dbReference>
<dbReference type="GO" id="GO:0043548">
    <property type="term" value="F:phosphatidylinositol 3-kinase binding"/>
    <property type="evidence" value="ECO:0000314"/>
    <property type="project" value="UniProtKB"/>
</dbReference>
<dbReference type="GO" id="GO:0036312">
    <property type="term" value="F:phosphatidylinositol 3-kinase regulatory subunit binding"/>
    <property type="evidence" value="ECO:0000314"/>
    <property type="project" value="UniProtKB"/>
</dbReference>
<dbReference type="GO" id="GO:0032266">
    <property type="term" value="F:phosphatidylinositol-3-phosphate binding"/>
    <property type="evidence" value="ECO:0000314"/>
    <property type="project" value="UniProtKB"/>
</dbReference>
<dbReference type="GO" id="GO:0070273">
    <property type="term" value="F:phosphatidylinositol-4-phosphate binding"/>
    <property type="evidence" value="ECO:0000314"/>
    <property type="project" value="UniProtKB"/>
</dbReference>
<dbReference type="GO" id="GO:0042803">
    <property type="term" value="F:protein homodimerization activity"/>
    <property type="evidence" value="ECO:0000353"/>
    <property type="project" value="BHF-UCL"/>
</dbReference>
<dbReference type="GO" id="GO:0019901">
    <property type="term" value="F:protein kinase binding"/>
    <property type="evidence" value="ECO:0000314"/>
    <property type="project" value="ParkinsonsUK-UCL"/>
</dbReference>
<dbReference type="GO" id="GO:0051721">
    <property type="term" value="F:protein phosphatase 2A binding"/>
    <property type="evidence" value="ECO:0000353"/>
    <property type="project" value="BHF-UCL"/>
</dbReference>
<dbReference type="GO" id="GO:0043539">
    <property type="term" value="F:protein serine/threonine kinase activator activity"/>
    <property type="evidence" value="ECO:0000314"/>
    <property type="project" value="GO_Central"/>
</dbReference>
<dbReference type="GO" id="GO:0044877">
    <property type="term" value="F:protein-containing complex binding"/>
    <property type="evidence" value="ECO:0000314"/>
    <property type="project" value="UniProtKB"/>
</dbReference>
<dbReference type="GO" id="GO:0017124">
    <property type="term" value="F:SH3 domain binding"/>
    <property type="evidence" value="ECO:0000314"/>
    <property type="project" value="UniProtKB"/>
</dbReference>
<dbReference type="GO" id="GO:0035591">
    <property type="term" value="F:signaling adaptor activity"/>
    <property type="evidence" value="ECO:0000314"/>
    <property type="project" value="GO_Central"/>
</dbReference>
<dbReference type="GO" id="GO:0043184">
    <property type="term" value="F:vascular endothelial growth factor receptor 2 binding"/>
    <property type="evidence" value="ECO:0000353"/>
    <property type="project" value="UniProtKB"/>
</dbReference>
<dbReference type="GO" id="GO:0001525">
    <property type="term" value="P:angiogenesis"/>
    <property type="evidence" value="ECO:0007669"/>
    <property type="project" value="UniProtKB-KW"/>
</dbReference>
<dbReference type="GO" id="GO:0021814">
    <property type="term" value="P:cell motility involved in cerebral cortex radial glia guided migration"/>
    <property type="evidence" value="ECO:0000250"/>
    <property type="project" value="UniProtKB"/>
</dbReference>
<dbReference type="GO" id="GO:0071364">
    <property type="term" value="P:cellular response to epidermal growth factor stimulus"/>
    <property type="evidence" value="ECO:0000250"/>
    <property type="project" value="BHF-UCL"/>
</dbReference>
<dbReference type="GO" id="GO:0071347">
    <property type="term" value="P:cellular response to interleukin-1"/>
    <property type="evidence" value="ECO:0000314"/>
    <property type="project" value="UniProtKB"/>
</dbReference>
<dbReference type="GO" id="GO:0071222">
    <property type="term" value="P:cellular response to lipopolysaccharide"/>
    <property type="evidence" value="ECO:0000314"/>
    <property type="project" value="UniProtKB"/>
</dbReference>
<dbReference type="GO" id="GO:0071356">
    <property type="term" value="P:cellular response to tumor necrosis factor"/>
    <property type="evidence" value="ECO:0000314"/>
    <property type="project" value="UniProtKB"/>
</dbReference>
<dbReference type="GO" id="GO:0034620">
    <property type="term" value="P:cellular response to unfolded protein"/>
    <property type="evidence" value="ECO:0000304"/>
    <property type="project" value="ParkinsonsUK-UCL"/>
</dbReference>
<dbReference type="GO" id="GO:0035924">
    <property type="term" value="P:cellular response to vascular endothelial growth factor stimulus"/>
    <property type="evidence" value="ECO:0000314"/>
    <property type="project" value="UniProtKB"/>
</dbReference>
<dbReference type="GO" id="GO:0072577">
    <property type="term" value="P:endothelial cell apoptotic process"/>
    <property type="evidence" value="ECO:0000304"/>
    <property type="project" value="BHF-UCL"/>
</dbReference>
<dbReference type="GO" id="GO:0008625">
    <property type="term" value="P:extrinsic apoptotic signaling pathway via death domain receptors"/>
    <property type="evidence" value="ECO:0000315"/>
    <property type="project" value="BHF-UCL"/>
</dbReference>
<dbReference type="GO" id="GO:0006954">
    <property type="term" value="P:inflammatory response"/>
    <property type="evidence" value="ECO:0007669"/>
    <property type="project" value="UniProtKB-KW"/>
</dbReference>
<dbReference type="GO" id="GO:0045087">
    <property type="term" value="P:innate immune response"/>
    <property type="evidence" value="ECO:0007669"/>
    <property type="project" value="UniProtKB-KW"/>
</dbReference>
<dbReference type="GO" id="GO:0035556">
    <property type="term" value="P:intracellular signal transduction"/>
    <property type="evidence" value="ECO:0000315"/>
    <property type="project" value="UniProtKB"/>
</dbReference>
<dbReference type="GO" id="GO:0070059">
    <property type="term" value="P:intrinsic apoptotic signaling pathway in response to endoplasmic reticulum stress"/>
    <property type="evidence" value="ECO:0000250"/>
    <property type="project" value="BHF-UCL"/>
</dbReference>
<dbReference type="GO" id="GO:0021819">
    <property type="term" value="P:layer formation in cerebral cortex"/>
    <property type="evidence" value="ECO:0000250"/>
    <property type="project" value="UniProtKB"/>
</dbReference>
<dbReference type="GO" id="GO:0016525">
    <property type="term" value="P:negative regulation of angiogenesis"/>
    <property type="evidence" value="ECO:0000314"/>
    <property type="project" value="UniProtKB"/>
</dbReference>
<dbReference type="GO" id="GO:0043124">
    <property type="term" value="P:negative regulation of canonical NF-kappaB signal transduction"/>
    <property type="evidence" value="ECO:0000314"/>
    <property type="project" value="UniProtKB"/>
</dbReference>
<dbReference type="GO" id="GO:0090090">
    <property type="term" value="P:negative regulation of canonical Wnt signaling pathway"/>
    <property type="evidence" value="ECO:0000315"/>
    <property type="project" value="BHF-UCL"/>
</dbReference>
<dbReference type="GO" id="GO:0008285">
    <property type="term" value="P:negative regulation of cell population proliferation"/>
    <property type="evidence" value="ECO:0000314"/>
    <property type="project" value="UniProtKB"/>
</dbReference>
<dbReference type="GO" id="GO:0045892">
    <property type="term" value="P:negative regulation of DNA-templated transcription"/>
    <property type="evidence" value="ECO:0000315"/>
    <property type="project" value="UniProtKB"/>
</dbReference>
<dbReference type="GO" id="GO:0010596">
    <property type="term" value="P:negative regulation of endothelial cell migration"/>
    <property type="evidence" value="ECO:0000315"/>
    <property type="project" value="UniProtKB"/>
</dbReference>
<dbReference type="GO" id="GO:0042059">
    <property type="term" value="P:negative regulation of epidermal growth factor receptor signaling pathway"/>
    <property type="evidence" value="ECO:0000250"/>
    <property type="project" value="BHF-UCL"/>
</dbReference>
<dbReference type="GO" id="GO:0010633">
    <property type="term" value="P:negative regulation of epithelial cell migration"/>
    <property type="evidence" value="ECO:0000315"/>
    <property type="project" value="UniProtKB"/>
</dbReference>
<dbReference type="GO" id="GO:0050680">
    <property type="term" value="P:negative regulation of epithelial cell proliferation"/>
    <property type="evidence" value="ECO:0000315"/>
    <property type="project" value="BHF-UCL"/>
</dbReference>
<dbReference type="GO" id="GO:0010719">
    <property type="term" value="P:negative regulation of epithelial to mesenchymal transition"/>
    <property type="evidence" value="ECO:0000314"/>
    <property type="project" value="UniProtKB"/>
</dbReference>
<dbReference type="GO" id="GO:0070373">
    <property type="term" value="P:negative regulation of ERK1 and ERK2 cascade"/>
    <property type="evidence" value="ECO:0000314"/>
    <property type="project" value="UniProtKB"/>
</dbReference>
<dbReference type="GO" id="GO:0048147">
    <property type="term" value="P:negative regulation of fibroblast proliferation"/>
    <property type="evidence" value="ECO:0000250"/>
    <property type="project" value="BHF-UCL"/>
</dbReference>
<dbReference type="GO" id="GO:0070317">
    <property type="term" value="P:negative regulation of G0 to G1 transition"/>
    <property type="evidence" value="ECO:0000314"/>
    <property type="project" value="UniProtKB"/>
</dbReference>
<dbReference type="GO" id="GO:0034260">
    <property type="term" value="P:negative regulation of GTPase activity"/>
    <property type="evidence" value="ECO:0000250"/>
    <property type="project" value="UniProtKB"/>
</dbReference>
<dbReference type="GO" id="GO:0043409">
    <property type="term" value="P:negative regulation of MAPK cascade"/>
    <property type="evidence" value="ECO:0000315"/>
    <property type="project" value="BHF-UCL"/>
</dbReference>
<dbReference type="GO" id="GO:1901223">
    <property type="term" value="P:negative regulation of non-canonical NF-kappaB signal transduction"/>
    <property type="evidence" value="ECO:0000315"/>
    <property type="project" value="BHF-UCL"/>
</dbReference>
<dbReference type="GO" id="GO:0051898">
    <property type="term" value="P:negative regulation of phosphatidylinositol 3-kinase/protein kinase B signal transduction"/>
    <property type="evidence" value="ECO:0000314"/>
    <property type="project" value="UniProtKB"/>
</dbReference>
<dbReference type="GO" id="GO:0042177">
    <property type="term" value="P:negative regulation of protein catabolic process"/>
    <property type="evidence" value="ECO:0000314"/>
    <property type="project" value="UniProtKB"/>
</dbReference>
<dbReference type="GO" id="GO:0046580">
    <property type="term" value="P:negative regulation of Ras protein signal transduction"/>
    <property type="evidence" value="ECO:0000315"/>
    <property type="project" value="BHF-UCL"/>
</dbReference>
<dbReference type="GO" id="GO:0034144">
    <property type="term" value="P:negative regulation of toll-like receptor 4 signaling pathway"/>
    <property type="evidence" value="ECO:0000314"/>
    <property type="project" value="UniProtKB"/>
</dbReference>
<dbReference type="GO" id="GO:0000122">
    <property type="term" value="P:negative regulation of transcription by RNA polymerase II"/>
    <property type="evidence" value="ECO:0000314"/>
    <property type="project" value="BHF-UCL"/>
</dbReference>
<dbReference type="GO" id="GO:0030948">
    <property type="term" value="P:negative regulation of vascular endothelial growth factor receptor signaling pathway"/>
    <property type="evidence" value="ECO:0000315"/>
    <property type="project" value="UniProtKB"/>
</dbReference>
<dbReference type="GO" id="GO:1900747">
    <property type="term" value="P:negative regulation of vascular endothelial growth factor signaling pathway"/>
    <property type="evidence" value="ECO:0000250"/>
    <property type="project" value="UniProtKB"/>
</dbReference>
<dbReference type="GO" id="GO:0048812">
    <property type="term" value="P:neuron projection morphogenesis"/>
    <property type="evidence" value="ECO:0000250"/>
    <property type="project" value="UniProtKB"/>
</dbReference>
<dbReference type="GO" id="GO:0043065">
    <property type="term" value="P:positive regulation of apoptotic process"/>
    <property type="evidence" value="ECO:0000314"/>
    <property type="project" value="UniProtKB"/>
</dbReference>
<dbReference type="GO" id="GO:2001235">
    <property type="term" value="P:positive regulation of apoptotic signaling pathway"/>
    <property type="evidence" value="ECO:0000314"/>
    <property type="project" value="UniProtKB"/>
</dbReference>
<dbReference type="GO" id="GO:0043123">
    <property type="term" value="P:positive regulation of canonical NF-kappaB signal transduction"/>
    <property type="evidence" value="ECO:0000250"/>
    <property type="project" value="UniProtKB"/>
</dbReference>
<dbReference type="GO" id="GO:1900006">
    <property type="term" value="P:positive regulation of dendrite development"/>
    <property type="evidence" value="ECO:0000250"/>
    <property type="project" value="UniProtKB"/>
</dbReference>
<dbReference type="GO" id="GO:1903896">
    <property type="term" value="P:positive regulation of IRE1-mediated unfolded protein response"/>
    <property type="evidence" value="ECO:0000304"/>
    <property type="project" value="ParkinsonsUK-UCL"/>
</dbReference>
<dbReference type="GO" id="GO:0046330">
    <property type="term" value="P:positive regulation of JNK cascade"/>
    <property type="evidence" value="ECO:0000314"/>
    <property type="project" value="UniProtKB"/>
</dbReference>
<dbReference type="GO" id="GO:0043410">
    <property type="term" value="P:positive regulation of MAPK cascade"/>
    <property type="evidence" value="ECO:0000314"/>
    <property type="project" value="UniProtKB"/>
</dbReference>
<dbReference type="GO" id="GO:2001224">
    <property type="term" value="P:positive regulation of neuron migration"/>
    <property type="evidence" value="ECO:0000250"/>
    <property type="project" value="UniProtKB"/>
</dbReference>
<dbReference type="GO" id="GO:0010976">
    <property type="term" value="P:positive regulation of neuron projection development"/>
    <property type="evidence" value="ECO:0000250"/>
    <property type="project" value="UniProtKB"/>
</dbReference>
<dbReference type="GO" id="GO:1901800">
    <property type="term" value="P:positive regulation of proteasomal protein catabolic process"/>
    <property type="evidence" value="ECO:0000315"/>
    <property type="project" value="UniProtKB"/>
</dbReference>
<dbReference type="GO" id="GO:0045732">
    <property type="term" value="P:positive regulation of protein catabolic process"/>
    <property type="evidence" value="ECO:0000250"/>
    <property type="project" value="UniProtKB"/>
</dbReference>
<dbReference type="GO" id="GO:0031334">
    <property type="term" value="P:positive regulation of protein-containing complex assembly"/>
    <property type="evidence" value="ECO:0000314"/>
    <property type="project" value="ParkinsonsUK-UCL"/>
</dbReference>
<dbReference type="GO" id="GO:0090129">
    <property type="term" value="P:positive regulation of synapse maturation"/>
    <property type="evidence" value="ECO:0000250"/>
    <property type="project" value="UniProtKB"/>
</dbReference>
<dbReference type="GO" id="GO:0045944">
    <property type="term" value="P:positive regulation of transcription by RNA polymerase II"/>
    <property type="evidence" value="ECO:0000314"/>
    <property type="project" value="UniProtKB"/>
</dbReference>
<dbReference type="GO" id="GO:0030163">
    <property type="term" value="P:protein catabolic process"/>
    <property type="evidence" value="ECO:0000314"/>
    <property type="project" value="UniProtKB"/>
</dbReference>
<dbReference type="GO" id="GO:0043122">
    <property type="term" value="P:regulation of canonical NF-kappaB signal transduction"/>
    <property type="evidence" value="ECO:0000250"/>
    <property type="project" value="UniProtKB"/>
</dbReference>
<dbReference type="GO" id="GO:0051726">
    <property type="term" value="P:regulation of cell cycle"/>
    <property type="evidence" value="ECO:0000314"/>
    <property type="project" value="UniProtKB"/>
</dbReference>
<dbReference type="GO" id="GO:0043087">
    <property type="term" value="P:regulation of GTPase activity"/>
    <property type="evidence" value="ECO:0000250"/>
    <property type="project" value="UniProtKB"/>
</dbReference>
<dbReference type="GO" id="GO:1900744">
    <property type="term" value="P:regulation of p38MAPK cascade"/>
    <property type="evidence" value="ECO:0000250"/>
    <property type="project" value="UniProtKB"/>
</dbReference>
<dbReference type="GO" id="GO:0043254">
    <property type="term" value="P:regulation of protein-containing complex assembly"/>
    <property type="evidence" value="ECO:0000314"/>
    <property type="project" value="UniProtKB"/>
</dbReference>
<dbReference type="GO" id="GO:0035148">
    <property type="term" value="P:tube formation"/>
    <property type="evidence" value="ECO:0000315"/>
    <property type="project" value="UniProtKB"/>
</dbReference>
<dbReference type="GO" id="GO:0033209">
    <property type="term" value="P:tumor necrosis factor-mediated signaling pathway"/>
    <property type="evidence" value="ECO:0000314"/>
    <property type="project" value="BHF-UCL"/>
</dbReference>
<dbReference type="GO" id="GO:0036324">
    <property type="term" value="P:vascular endothelial growth factor receptor-2 signaling pathway"/>
    <property type="evidence" value="ECO:0000250"/>
    <property type="project" value="UniProtKB"/>
</dbReference>
<dbReference type="CDD" id="cd04013">
    <property type="entry name" value="C2_SynGAP_like"/>
    <property type="match status" value="1"/>
</dbReference>
<dbReference type="CDD" id="cd13376">
    <property type="entry name" value="PH_DAB2IP"/>
    <property type="match status" value="1"/>
</dbReference>
<dbReference type="CDD" id="cd05136">
    <property type="entry name" value="RasGAP_DAB2IP"/>
    <property type="match status" value="1"/>
</dbReference>
<dbReference type="FunFam" id="1.10.506.10:FF:000001">
    <property type="entry name" value="Ras GTPase-activating protein nGAP isoform 2"/>
    <property type="match status" value="1"/>
</dbReference>
<dbReference type="FunFam" id="2.60.40.150:FF:000010">
    <property type="entry name" value="Ras GTPase-activating protein nGAP isoform 2"/>
    <property type="match status" value="1"/>
</dbReference>
<dbReference type="Gene3D" id="2.60.40.150">
    <property type="entry name" value="C2 domain"/>
    <property type="match status" value="1"/>
</dbReference>
<dbReference type="Gene3D" id="1.10.506.10">
    <property type="entry name" value="GTPase Activation - p120gap, domain 1"/>
    <property type="match status" value="2"/>
</dbReference>
<dbReference type="Gene3D" id="2.30.29.30">
    <property type="entry name" value="Pleckstrin-homology domain (PH domain)/Phosphotyrosine-binding domain (PTB)"/>
    <property type="match status" value="1"/>
</dbReference>
<dbReference type="InterPro" id="IPR000008">
    <property type="entry name" value="C2_dom"/>
</dbReference>
<dbReference type="InterPro" id="IPR035892">
    <property type="entry name" value="C2_domain_sf"/>
</dbReference>
<dbReference type="InterPro" id="IPR021887">
    <property type="entry name" value="DAB2P_C"/>
</dbReference>
<dbReference type="InterPro" id="IPR011993">
    <property type="entry name" value="PH-like_dom_sf"/>
</dbReference>
<dbReference type="InterPro" id="IPR001849">
    <property type="entry name" value="PH_domain"/>
</dbReference>
<dbReference type="InterPro" id="IPR039360">
    <property type="entry name" value="Ras_GTPase"/>
</dbReference>
<dbReference type="InterPro" id="IPR023152">
    <property type="entry name" value="RasGAP_CS"/>
</dbReference>
<dbReference type="InterPro" id="IPR001936">
    <property type="entry name" value="RasGAP_dom"/>
</dbReference>
<dbReference type="InterPro" id="IPR008936">
    <property type="entry name" value="Rho_GTPase_activation_prot"/>
</dbReference>
<dbReference type="PANTHER" id="PTHR10194:SF26">
    <property type="entry name" value="DISABLED HOMOLOG 2-INTERACTING PROTEIN"/>
    <property type="match status" value="1"/>
</dbReference>
<dbReference type="PANTHER" id="PTHR10194">
    <property type="entry name" value="RAS GTPASE-ACTIVATING PROTEINS"/>
    <property type="match status" value="1"/>
</dbReference>
<dbReference type="Pfam" id="PF00168">
    <property type="entry name" value="C2"/>
    <property type="match status" value="1"/>
</dbReference>
<dbReference type="Pfam" id="PF12004">
    <property type="entry name" value="DAB2P_C"/>
    <property type="match status" value="1"/>
</dbReference>
<dbReference type="Pfam" id="PF25321">
    <property type="entry name" value="PH_RASGAP"/>
    <property type="match status" value="1"/>
</dbReference>
<dbReference type="Pfam" id="PF00616">
    <property type="entry name" value="RasGAP"/>
    <property type="match status" value="2"/>
</dbReference>
<dbReference type="SMART" id="SM00239">
    <property type="entry name" value="C2"/>
    <property type="match status" value="1"/>
</dbReference>
<dbReference type="SMART" id="SM00233">
    <property type="entry name" value="PH"/>
    <property type="match status" value="1"/>
</dbReference>
<dbReference type="SMART" id="SM00323">
    <property type="entry name" value="RasGAP"/>
    <property type="match status" value="1"/>
</dbReference>
<dbReference type="SUPFAM" id="SSF49562">
    <property type="entry name" value="C2 domain (Calcium/lipid-binding domain, CaLB)"/>
    <property type="match status" value="1"/>
</dbReference>
<dbReference type="SUPFAM" id="SSF48350">
    <property type="entry name" value="GTPase activation domain, GAP"/>
    <property type="match status" value="1"/>
</dbReference>
<dbReference type="SUPFAM" id="SSF50729">
    <property type="entry name" value="PH domain-like"/>
    <property type="match status" value="1"/>
</dbReference>
<dbReference type="PROSITE" id="PS50004">
    <property type="entry name" value="C2"/>
    <property type="match status" value="1"/>
</dbReference>
<dbReference type="PROSITE" id="PS50003">
    <property type="entry name" value="PH_DOMAIN"/>
    <property type="match status" value="1"/>
</dbReference>
<dbReference type="PROSITE" id="PS00509">
    <property type="entry name" value="RAS_GTPASE_ACTIV_1"/>
    <property type="match status" value="1"/>
</dbReference>
<dbReference type="PROSITE" id="PS50018">
    <property type="entry name" value="RAS_GTPASE_ACTIV_2"/>
    <property type="match status" value="1"/>
</dbReference>
<comment type="function">
    <text evidence="8 12 13 14 15 16 17 18 19 20 21">Functions as a scaffold protein implicated in the regulation of a large spectrum of both general and specialized signaling pathways. Involved in several processes such as innate immune response, inflammation and cell growth inhibition, apoptosis, cell survival, angiogenesis, cell migration and maturation. Also plays a role in cell cycle checkpoint control; reduces G1 phase cyclin levels resulting in G0/G1 cell cycle arrest. Mediates signal transduction by receptor-mediated inflammatory signals, such as the tumor necrosis factor (TNF), interferon (IFN) or lipopolysaccharide (LPS). Modulates the balance between phosphatidylinositol 3-kinase (PI3K)-AKT-mediated cell survival and apoptosis stimulated kinase (MAP3K5)-JNK signaling pathways; sequesters both AKT1 and MAP3K5 and counterbalances the activity of each kinase by modulating their phosphorylation status in response to pro-inflammatory stimuli. Acts as a regulator of the endoplasmic reticulum (ER) unfolded protein response (UPR) pathway; specifically involved in transduction of the ER stress-response to the JNK cascade through ERN1. Mediates TNF-alpha-induced apoptosis activation by facilitating dissociation of inhibitor 14-3-3 from MAP3K5; recruits the PP2A phosphatase complex which dephosphorylates MAP3K5 on 'Ser-966', leading to the dissociation of 13-3-3 proteins and activation of the MAP3K5-JNK signaling pathway in endothelial cells. Also mediates TNF/TRAF2-induced MAP3K5-JNK activation, while it inhibits CHUK-NF-kappa-B signaling. Acts a negative regulator in the IFN-gamma-mediated JAK-STAT signaling cascade by inhibiting smooth muscle cell (VSMCs) proliferation and intimal expansion, and thus, prevents graft arteriosclerosis (GA). Acts as a GTPase-activating protein (GAP) for the ADP ribosylation factor 6 (ARF6), Ras and RAB40C (PubMed:29156729). Promotes hydrolysis of the ARF6-bound GTP and thus, negatively regulates phosphatidylinositol 4,5-bisphosphate (PIP2)-dependent TLR4-TIRAP-MyD88 and NF-kappa-B signaling pathways in endothelial cells in response to lipopolysaccharides (LPS). Binds specifically to phosphatidylinositol 4-phosphate (PtdIns4P) and phosphatidylinositol 3-phosphate (PtdIns3P). In response to vascular endothelial growth factor (VEGFA), acts as a negative regulator of the VEGFR2-PI3K-mediated angiogenic signaling pathway by inhibiting endothelial cell migration and tube formation. In the developing brain, promotes both the transition from the multipolar to the bipolar stage and the radial migration of cortical neurons from the ventricular zone toward the superficial layer of the neocortex in a glial-dependent locomotion process. Probable downstream effector of the Reelin signaling pathway; promotes Purkinje cell (PC) dendrites development and formation of cerebellar synapses. Also functions as a tumor suppressor protein in prostate cancer progression; prevents cell proliferation and epithelial-to-mesenchymal transition (EMT) through activation of the glycogen synthase kinase-3 beta (GSK3B)-induced beta-catenin and inhibition of PI3K-AKT and Ras-MAPK survival downstream signaling cascades, respectively.</text>
</comment>
<comment type="subunit">
    <text evidence="1 8 10 11 12 14 15 16 17 19 21">On plasma membrane, exists in an inactive form complexed with TNFR1; in response to TNF-alpha, dissociates from TNFR1 complex, translocates to cytoplasm and forms part of an intracellular signaling complex comprising TRADD, RIPK1, TRAF2 and MAP3K5. Interacts with DAB1. Interacts (via NPXY motif) with DAB2 (via PID domain). Interacts (via PH domain) with ERN1 (By similarity). Part of a cytoplasmic complex made of HIPK1, DAB2IP and MAP3K5 in response to TNF-alpha; this complex formation promotes MAP3K5-JNK activation and subsequent apoptosis. Interacts (via N-terminal domain) with JAK2; the interaction occurs in a IFNG/IFN-gamma-dependent manner and inhibits JAK2 autophosphorylation activity. Interacts (via C2 domain) with GSK3B; the interaction stimulates GSK3B kinase activation. Interacts (via C2 domain) with PPP2CA. Interacts (via proline-rich motif) with a regulatory p85 subunit (via SH3 domain) of the PI3K complex; the interaction inhibits the PI3K-AKT complex activity in a TNF-alpha-dependent manner in prostate cancer (PCa) cells. Interacts with AKT1; the interaction is increased in a TNF-alpha-induced manner. Interacts (via C2 domain and active form preferentially) with KDR/VEGFR2 (tyrosine-phosphorylated active form preferentially); the interaction occurs at the late phase of VEGFA response and inhibits KDR/VEGFR2 activity. Interacts (via N-terminus C2 domain) with MAP3K5 ('Ser-966' dephosphorylated form preferentially); the interaction occurs in a TNF-alpha-induced manner. Interacts (via Ras-GAP domain) with the catalytic subunit of protein phosphatase PP2A; the interaction occurs in resting endothelial cells, is further enhanced by TNF-alpha stimulation and is required to bridge PP2A to MAP3K5. Interacts (via C-terminus PER domain) with TRAF2 (via zinc fingers); the interaction occurs in a TNF-alpha-dependent manner. Interacts with 14-3-3 proteins; the interaction occurs in a TNF-alpha-dependent manner. Interacts (via Ras-GAP domain) with RIPK1 (via kinase domain); the interaction occurs in a TNF-alpha-dependent manner. Interacts with RAB40C; acts as a GAP for RAB40C (PubMed:29156729).</text>
</comment>
<comment type="interaction">
    <interactant intactId="EBI-2871881">
        <id>Q5VWQ8</id>
    </interactant>
    <interactant intactId="EBI-2871881">
        <id>Q5VWQ8</id>
        <label>DAB2IP</label>
    </interactant>
    <organismsDiffer>false</organismsDiffer>
    <experiments>2</experiments>
</comment>
<comment type="interaction">
    <interactant intactId="EBI-2871881">
        <id>Q5VWQ8</id>
    </interactant>
    <interactant intactId="EBI-373586">
        <id>P49841</id>
        <label>GSK3B</label>
    </interactant>
    <organismsDiffer>false</organismsDiffer>
    <experiments>2</experiments>
</comment>
<comment type="interaction">
    <interactant intactId="EBI-2871881">
        <id>Q5VWQ8</id>
    </interactant>
    <interactant intactId="EBI-476263">
        <id>Q99683</id>
        <label>MAP3K5</label>
    </interactant>
    <organismsDiffer>false</organismsDiffer>
    <experiments>2</experiments>
</comment>
<comment type="interaction">
    <interactant intactId="EBI-9543020">
        <id>Q5VWQ8-2</id>
    </interactant>
    <interactant intactId="EBI-710484">
        <id>O15169</id>
        <label>AXIN1</label>
    </interactant>
    <organismsDiffer>false</organismsDiffer>
    <experiments>2</experiments>
</comment>
<comment type="interaction">
    <interactant intactId="EBI-9543020">
        <id>Q5VWQ8-2</id>
    </interactant>
    <interactant intactId="EBI-373586">
        <id>P49841</id>
        <label>GSK3B</label>
    </interactant>
    <organismsDiffer>false</organismsDiffer>
    <experiments>2</experiments>
</comment>
<comment type="interaction">
    <interactant intactId="EBI-12196395">
        <id>Q5VWQ8-5</id>
    </interactant>
    <interactant intactId="EBI-11954519">
        <id>Q49AR9</id>
        <label>ANKS1A</label>
    </interactant>
    <organismsDiffer>false</organismsDiffer>
    <experiments>3</experiments>
</comment>
<comment type="subcellular location">
    <subcellularLocation>
        <location evidence="21">Cytoplasm</location>
    </subcellularLocation>
    <subcellularLocation>
        <location evidence="21">Cell membrane</location>
        <topology evidence="26">Peripheral membrane protein</topology>
    </subcellularLocation>
    <subcellularLocation>
        <location evidence="21">Membrane</location>
    </subcellularLocation>
    <subcellularLocation>
        <location evidence="1">Cell projection</location>
        <location evidence="1">Dendrite</location>
    </subcellularLocation>
    <text evidence="1 21">Localized in soma and dendrites of Purkinje cells as well as in scattered cell bodies in the molecular layer of the cerebellum (By similarity). Colocalizes with TIRAP at the plasma membrane. Colocalizes with ARF6 at the plasma membrane and endocytic vesicles. Translocates from the plasma membrane to the cytoplasm in response to TNF-alpha. Phosphatidylinositol 4-phosphate (PtdIns4P) binding is essential for plasma membrane localization. Localized in the cytoplasmic space in close proximity to lipid droplets (PubMed:29156729).</text>
</comment>
<comment type="alternative products">
    <event type="alternative splicing"/>
    <isoform>
        <id>Q5VWQ8-1</id>
        <name>1</name>
        <sequence type="displayed"/>
    </isoform>
    <isoform>
        <id>Q5VWQ8-2</id>
        <name>2</name>
        <sequence type="described" ref="VSP_020953"/>
    </isoform>
    <isoform>
        <id>Q5VWQ8-3</id>
        <name>3</name>
        <sequence type="described" ref="VSP_020952 VSP_020954"/>
    </isoform>
    <isoform>
        <id>Q5VWQ8-4</id>
        <name>4</name>
        <sequence type="described" ref="VSP_020953 VSP_020954"/>
    </isoform>
    <isoform>
        <id>Q5VWQ8-5</id>
        <name>5</name>
        <sequence type="described" ref="VSP_047361 VSP_020954"/>
    </isoform>
</comment>
<comment type="tissue specificity">
    <text evidence="7 12 19 20">Expressed in endothelial and vascular smooth muscle cells (VSMCs). Expressed in prostate epithelial but poorly in prostate cancer cells. Poorly expressed in medulloblastoma cells compared to cerebellar precursor proliferating progenitor cells (at protein level). Low expression in prostate. Down-regulated in prostate cancer.</text>
</comment>
<comment type="induction">
    <text evidence="18 20">Down-regulated in prostate cancer and medulloblastoma.</text>
</comment>
<comment type="domain">
    <text evidence="1">The C2 and Ras-GAP domains constitutively bind to MAP3K5 and facilitate the release of 14-3-3 proteins from MAP3K5. The PH and Ras-GAP domains, but not the NPXY motif, are crucial for its cell membrane localization and neuronal migration function. The PH domain is necessary but not sufficient to activate the JNK signaling pathway through ERN1 (By similarity). Exists in a closed inactive form by an intramolecular interaction between the N- and the C-terminal domains. The proline-rich motif is critical both for PI3K-AKT activity inhibition and MAP3K5 activation. The PH and C2 domains are necessary for the binding to phosphatidylinositol phosphate. The Ras-GAP domain is necessary for its tumor-suppressive function.</text>
</comment>
<comment type="PTM">
    <text evidence="12 15">In response to TNF-alpha-induction, phosphorylated at Ser-728; phosphorylation leads to a conformational change, and thus, increases its association with 14-3-3 proteins, MAP3K5, RIPK1 and TRAF2 in endothelial cells; also stimulates regulatory p85 subunit sequestring and PI3K-p85 complex activity inhibition.</text>
</comment>
<comment type="disease">
    <text evidence="9">A chromosomal aberration involving DAB2IP is found in a patient with acute myeloid leukemia (AML). Translocation t(9;11)(q34;q23) with KMT2A/MLL1. May give rise to a KMT2A/MLL1-DAB2IP fusion protein lacking the PH domain (PubMed:14978793).</text>
</comment>
<comment type="miscellaneous">
    <text evidence="27 28">The DAB2IP gene is found epigenetically silenced in numerous aggressive cancers, like prostate cancers and medulloblastoma tumors. Epigenetic suppression of DAB2IP by EZH2 is a major mechanism of DAB2IP inactivation in human prostate cancer and increases metastatic potential (PubMed:20154697, PubMed:22696229).</text>
</comment>
<comment type="online information" name="Atlas of Genetics and Cytogenetics in Oncology and Haematology">
    <link uri="https://atlasgeneticsoncology.org/gene/316/AF9q34"/>
</comment>
<sequence length="1189" mass="131625">MSAGGSARKSTGRSSYYYRLLRRPRLQRQRSRSRSRTRPARESPQERPGSRRSLPGSLSEKSPSMEPSAATPFRVTGFLSRRLKGSIKRTKSQPKLDRNHSFRHILPGFRSAAAAAADNERSHLMPRLKESRSHESLLSPSSAVEALDLSMEEEVVIKPVHSSILGQDYCFEVTTSSGSKCFSCRSAAERDKWMENLRRAVHPNKDNSRRVEHILKLWVIEAKDLPAKKKYLCELCLDDVLYARTTGKLKTDNVFWGEHFEFHNLPPLRTVTVHLYRETDKKKKKERNSYLGLVSLPAASVAGRQFVEKWYPVVTPNPKGGKGPGPMIRIKARYQTITILPMEMYKEFAEHITNHYLGLCAALEPILSAKTKEEMASALVHILQSTGKVKDFLTDLMMSEVDRCGDNEHLIFRENTLATKAIEEYLKLVGQKYLQDALGEFIKALYESDENCEVDPSKCSAADLPEHQGNLKMCCELAFCKIINSYCVFPRELKEVFASWRQECSSRGRPDISERLISASLFLRFLCPAIMSPSLFNLLQEYPDDRTARTLTLIAKVTQNLANFAKFGSKEEYMSFMNQFLEHEWTNMQRFLLEISNPETLSNTAGFEGYIDLGRELSSLHSLLWEAVSQLEQSIVSKLGPLPRILRDVHTALSTPGSGQLPGTNDLASTPGSGSSSISAGLQKMVIENDLSGLIDFTRLPSPTPENKDLFFVTRSSGVQPSPARSSSYSEANEPDLQMANGGKSLSMVDLQDARTLDGEAGSPAGPDVLPTDGQAAAAQLVAGWPARATPVNLAGLATVRRAGQTPTTPGTSEGAPGRPQLLAPLSFQNPVYQMAAGLPLSPRGLGDSGSEGHSSLSSHSNSEELAAAAKLGSFSTAAEELARRPGELARRQMSLTEKGGQPTVPRQNSAGPQRRIDQPPPPPPPPPPAPRGRTPPNLLSTLQYPRPSSGTLASASPDWVGPSTRLRQQSSSSKGDSPELKPRAVHKQGPSPVSPNALDRTAAWLLTMNAQLLEDEGLGPDPPHRDRLRSKDELSQAEKDLAVLQDKLRISTKKLEEYETLFKCQEETTQKLVLEYQARLEEGEERLRRQQEDKDIQMKGIISRLMSVEEELKKDHAEMQAAVDSKQKIIDAQEKRIASLDAANARLMSALTQLKERYSMQARNGISPTNPTKLQITENGEFRNSSNC</sequence>
<evidence type="ECO:0000250" key="1"/>
<evidence type="ECO:0000255" key="2"/>
<evidence type="ECO:0000255" key="3">
    <source>
        <dbReference type="PROSITE-ProRule" id="PRU00041"/>
    </source>
</evidence>
<evidence type="ECO:0000255" key="4">
    <source>
        <dbReference type="PROSITE-ProRule" id="PRU00145"/>
    </source>
</evidence>
<evidence type="ECO:0000255" key="5">
    <source>
        <dbReference type="PROSITE-ProRule" id="PRU00167"/>
    </source>
</evidence>
<evidence type="ECO:0000256" key="6">
    <source>
        <dbReference type="SAM" id="MobiDB-lite"/>
    </source>
</evidence>
<evidence type="ECO:0000269" key="7">
    <source>
    </source>
</evidence>
<evidence type="ECO:0000269" key="8">
    <source>
    </source>
</evidence>
<evidence type="ECO:0000269" key="9">
    <source>
    </source>
</evidence>
<evidence type="ECO:0000269" key="10">
    <source>
    </source>
</evidence>
<evidence type="ECO:0000269" key="11">
    <source>
    </source>
</evidence>
<evidence type="ECO:0000269" key="12">
    <source>
    </source>
</evidence>
<evidence type="ECO:0000269" key="13">
    <source>
    </source>
</evidence>
<evidence type="ECO:0000269" key="14">
    <source>
    </source>
</evidence>
<evidence type="ECO:0000269" key="15">
    <source>
    </source>
</evidence>
<evidence type="ECO:0000269" key="16">
    <source>
    </source>
</evidence>
<evidence type="ECO:0000269" key="17">
    <source>
    </source>
</evidence>
<evidence type="ECO:0000269" key="18">
    <source>
    </source>
</evidence>
<evidence type="ECO:0000269" key="19">
    <source>
    </source>
</evidence>
<evidence type="ECO:0000269" key="20">
    <source>
    </source>
</evidence>
<evidence type="ECO:0000269" key="21">
    <source>
    </source>
</evidence>
<evidence type="ECO:0000303" key="22">
    <source>
    </source>
</evidence>
<evidence type="ECO:0000303" key="23">
    <source>
    </source>
</evidence>
<evidence type="ECO:0000303" key="24">
    <source>
    </source>
</evidence>
<evidence type="ECO:0000303" key="25">
    <source>
    </source>
</evidence>
<evidence type="ECO:0000305" key="26"/>
<evidence type="ECO:0000305" key="27">
    <source>
    </source>
</evidence>
<evidence type="ECO:0000305" key="28">
    <source>
    </source>
</evidence>
<evidence type="ECO:0000312" key="29">
    <source>
        <dbReference type="HGNC" id="HGNC:17294"/>
    </source>
</evidence>
<evidence type="ECO:0007744" key="30">
    <source>
    </source>
</evidence>
<evidence type="ECO:0007744" key="31">
    <source>
    </source>
</evidence>
<organism>
    <name type="scientific">Homo sapiens</name>
    <name type="common">Human</name>
    <dbReference type="NCBI Taxonomy" id="9606"/>
    <lineage>
        <taxon>Eukaryota</taxon>
        <taxon>Metazoa</taxon>
        <taxon>Chordata</taxon>
        <taxon>Craniata</taxon>
        <taxon>Vertebrata</taxon>
        <taxon>Euteleostomi</taxon>
        <taxon>Mammalia</taxon>
        <taxon>Eutheria</taxon>
        <taxon>Euarchontoglires</taxon>
        <taxon>Primates</taxon>
        <taxon>Haplorrhini</taxon>
        <taxon>Catarrhini</taxon>
        <taxon>Hominidae</taxon>
        <taxon>Homo</taxon>
    </lineage>
</organism>
<keyword id="KW-0025">Alternative splicing</keyword>
<keyword id="KW-0037">Angiogenesis</keyword>
<keyword id="KW-0053">Apoptosis</keyword>
<keyword id="KW-0131">Cell cycle</keyword>
<keyword id="KW-1003">Cell membrane</keyword>
<keyword id="KW-0966">Cell projection</keyword>
<keyword id="KW-0160">Chromosomal rearrangement</keyword>
<keyword id="KW-0175">Coiled coil</keyword>
<keyword id="KW-0963">Cytoplasm</keyword>
<keyword id="KW-0217">Developmental protein</keyword>
<keyword id="KW-0341">Growth regulation</keyword>
<keyword id="KW-0343">GTPase activation</keyword>
<keyword id="KW-0391">Immunity</keyword>
<keyword id="KW-0395">Inflammatory response</keyword>
<keyword id="KW-0399">Innate immunity</keyword>
<keyword id="KW-0472">Membrane</keyword>
<keyword id="KW-0597">Phosphoprotein</keyword>
<keyword id="KW-1267">Proteomics identification</keyword>
<keyword id="KW-1185">Reference proteome</keyword>
<keyword id="KW-0346">Stress response</keyword>
<keyword id="KW-0043">Tumor suppressor</keyword>
<keyword id="KW-0834">Unfolded protein response</keyword>
<feature type="chain" id="PRO_0000252407" description="Disabled homolog 2-interacting protein">
    <location>
        <begin position="1"/>
        <end position="1189"/>
    </location>
</feature>
<feature type="domain" description="PH" evidence="4">
    <location>
        <begin position="101"/>
        <end position="202"/>
    </location>
</feature>
<feature type="domain" description="C2" evidence="3">
    <location>
        <begin position="193"/>
        <end position="311"/>
    </location>
</feature>
<feature type="domain" description="Ras-GAP" evidence="5">
    <location>
        <begin position="387"/>
        <end position="595"/>
    </location>
</feature>
<feature type="region of interest" description="Disordered" evidence="6">
    <location>
        <begin position="1"/>
        <end position="75"/>
    </location>
</feature>
<feature type="region of interest" description="Necessary for interaction with AKT1" evidence="15">
    <location>
        <begin position="646"/>
        <end position="943"/>
    </location>
</feature>
<feature type="region of interest" description="Disordered" evidence="6">
    <location>
        <begin position="653"/>
        <end position="678"/>
    </location>
</feature>
<feature type="region of interest" description="Disordered" evidence="6">
    <location>
        <begin position="715"/>
        <end position="742"/>
    </location>
</feature>
<feature type="region of interest" description="Disordered" evidence="6">
    <location>
        <begin position="803"/>
        <end position="823"/>
    </location>
</feature>
<feature type="region of interest" description="Disordered" evidence="6">
    <location>
        <begin position="843"/>
        <end position="865"/>
    </location>
</feature>
<feature type="region of interest" description="Disordered" evidence="6">
    <location>
        <begin position="895"/>
        <end position="998"/>
    </location>
</feature>
<feature type="region of interest" description="Disordered" evidence="6">
    <location>
        <begin position="1015"/>
        <end position="1035"/>
    </location>
</feature>
<feature type="region of interest" description="Disordered" evidence="6">
    <location>
        <begin position="1164"/>
        <end position="1189"/>
    </location>
</feature>
<feature type="coiled-coil region" evidence="2">
    <location>
        <begin position="1026"/>
        <end position="1159"/>
    </location>
</feature>
<feature type="compositionally biased region" description="Basic residues" evidence="6">
    <location>
        <begin position="20"/>
        <end position="38"/>
    </location>
</feature>
<feature type="compositionally biased region" description="Basic and acidic residues" evidence="6">
    <location>
        <begin position="39"/>
        <end position="49"/>
    </location>
</feature>
<feature type="compositionally biased region" description="Polar residues" evidence="6">
    <location>
        <begin position="653"/>
        <end position="668"/>
    </location>
</feature>
<feature type="compositionally biased region" description="Low complexity" evidence="6">
    <location>
        <begin position="669"/>
        <end position="678"/>
    </location>
</feature>
<feature type="compositionally biased region" description="Polar residues" evidence="6">
    <location>
        <begin position="715"/>
        <end position="731"/>
    </location>
</feature>
<feature type="compositionally biased region" description="Low complexity" evidence="6">
    <location>
        <begin position="852"/>
        <end position="865"/>
    </location>
</feature>
<feature type="compositionally biased region" description="Pro residues" evidence="6">
    <location>
        <begin position="919"/>
        <end position="931"/>
    </location>
</feature>
<feature type="compositionally biased region" description="Polar residues" evidence="6">
    <location>
        <begin position="938"/>
        <end position="955"/>
    </location>
</feature>
<feature type="compositionally biased region" description="Polar residues" evidence="6">
    <location>
        <begin position="966"/>
        <end position="976"/>
    </location>
</feature>
<feature type="compositionally biased region" description="Basic and acidic residues" evidence="6">
    <location>
        <begin position="1023"/>
        <end position="1035"/>
    </location>
</feature>
<feature type="site" description="Breakpoint for translocation to form KMT2A/MLL1-DAB2IP">
    <location>
        <begin position="172"/>
        <end position="173"/>
    </location>
</feature>
<feature type="site" description="Arginine finger; crucial for GTP hydrolysis by stabilizing the transition state" evidence="5">
    <location>
        <position position="413"/>
    </location>
</feature>
<feature type="modified residue" description="Phosphoserine; by MAP3K5 and RIPK1" evidence="12 15">
    <location>
        <position position="728"/>
    </location>
</feature>
<feature type="modified residue" description="Phosphoserine" evidence="31">
    <location>
        <position position="747"/>
    </location>
</feature>
<feature type="modified residue" description="Phosphoserine" evidence="30 31">
    <location>
        <position position="978"/>
    </location>
</feature>
<feature type="modified residue" description="Phosphoserine" evidence="31">
    <location>
        <position position="995"/>
    </location>
</feature>
<feature type="splice variant" id="VSP_020952" description="In isoform 3." evidence="23">
    <location>
        <begin position="1"/>
        <end position="193"/>
    </location>
</feature>
<feature type="splice variant" id="VSP_020953" description="In isoform 2 and isoform 4." evidence="22 24 25">
    <location>
        <begin position="1"/>
        <end position="124"/>
    </location>
</feature>
<feature type="splice variant" id="VSP_047361" description="In isoform 5." evidence="26">
    <original>SAGGSARKSTGRSSYYYRLLRRPRLQRQRSRSRSRTRPAR</original>
    <variation>EPDSLLDQDDSY</variation>
    <location>
        <begin position="2"/>
        <end position="41"/>
    </location>
</feature>
<feature type="splice variant" id="VSP_020954" description="In isoform 3, isoform 4 and isoform 5." evidence="22 23 25">
    <original>RYSMQARNGISPTNPTKLQITENGEFRNSSNC</original>
    <variation>SMH</variation>
    <location>
        <begin position="1158"/>
        <end position="1189"/>
    </location>
</feature>
<feature type="sequence variant" id="VAR_056858" description="In dbSNP:rs7027492.">
    <original>S</original>
    <variation>F</variation>
    <location>
        <position position="59"/>
    </location>
</feature>
<feature type="mutagenesis site" description="Reduces interaction with KDR/VEGFR2. Does not inhibit interaction with MAP3K5." evidence="8 14">
    <original>KKK</original>
    <variation>AAA</variation>
    <location>
        <begin position="228"/>
        <end position="230"/>
    </location>
</feature>
<feature type="mutagenesis site" description="Significantly reduces interaction with MAP3K5. Does not reduce interaction with KDR/VEGFR2." evidence="8 14">
    <original>KKKK</original>
    <variation>AAAA</variation>
    <location>
        <begin position="281"/>
        <end position="284"/>
    </location>
</feature>
<feature type="mutagenesis site" description="Decreased GAP activity toward RAB40C. Does not inhibit interaction with MAP3K5. Does not reduce GSK3B-induced beta-catenin transcription activity, TNF-alpha-induced apoptosis, ARF6-mediated TLR4-TIRAP-MyD88 signaling inhibition, Ras and NF-kappa-B activities and tumor development. Does not suppress tumor development; when associated with A-728." evidence="8 15 16 18 21">
    <original>R</original>
    <variation>L</variation>
    <location>
        <position position="413"/>
    </location>
</feature>
<feature type="mutagenesis site" description="Inhibits phosphorylation and TNF-alpha-induced MAP3K5 dephosphorylation. Reduces interaction with 14-3-3 proteins, AKT1, a regulatory p85 subunit, MAP3K5, RIPK1, TRAF2 and TNF-alpha-induced MAP3K5-JNK signaling and apoptosis. Reduces RAS activity. Does not reduce GSK3B-induced beta catenin-mediated transcription activity. Does not reduce NF-kappa-B activity, cell invasion, epithelial-to-mesenchymal transition (EMT) and tumor development. Does not suppress tumor development; when associated with R-413." evidence="12 13 15 18">
    <original>S</original>
    <variation>A</variation>
    <location>
        <position position="728"/>
    </location>
</feature>
<feature type="mutagenesis site" description="Reduces interaction with a regulatory p85 subunit of the PI3K complex. Inhibits MAP3K5 active form increase, AKT1 active form decrease, PI3K-p85 complex activity inhibition and TNF-induced apoptosis." evidence="15">
    <original>PPPPPPPPPP</original>
    <variation>AAAAAAAAAA</variation>
    <location>
        <begin position="920"/>
        <end position="929"/>
    </location>
</feature>
<feature type="mutagenesis site" description="Does not reduce interaction with 14-3-3 proteins." evidence="12">
    <original>T</original>
    <variation>A</variation>
    <location>
        <position position="935"/>
    </location>
</feature>
<feature type="sequence conflict" description="In Ref. 1; AAM00371." evidence="26" ref="1">
    <original>I</original>
    <variation>T</variation>
    <location>
        <position position="482"/>
    </location>
</feature>
<feature type="sequence conflict" description="In Ref. 1; AAM00371." evidence="26" ref="1">
    <original>P</original>
    <variation>S</variation>
    <location>
        <position position="921"/>
    </location>
</feature>
<feature type="sequence conflict" description="In Ref. 1; AAM00371." evidence="26" ref="1">
    <original>QQ</original>
    <variation>HE</variation>
    <location>
        <begin position="1091"/>
        <end position="1092"/>
    </location>
</feature>